<comment type="function">
    <text evidence="1">Catalyzes the attachment of L-aspartate to tRNA(Asp) in a two-step reaction: L-aspartate is first activated by ATP to form Asp-AMP and then transferred to the acceptor end of tRNA(Asp).</text>
</comment>
<comment type="catalytic activity">
    <reaction evidence="1">
        <text>tRNA(Asp) + L-aspartate + ATP = L-aspartyl-tRNA(Asp) + AMP + diphosphate</text>
        <dbReference type="Rhea" id="RHEA:19649"/>
        <dbReference type="Rhea" id="RHEA-COMP:9660"/>
        <dbReference type="Rhea" id="RHEA-COMP:9678"/>
        <dbReference type="ChEBI" id="CHEBI:29991"/>
        <dbReference type="ChEBI" id="CHEBI:30616"/>
        <dbReference type="ChEBI" id="CHEBI:33019"/>
        <dbReference type="ChEBI" id="CHEBI:78442"/>
        <dbReference type="ChEBI" id="CHEBI:78516"/>
        <dbReference type="ChEBI" id="CHEBI:456215"/>
        <dbReference type="EC" id="6.1.1.12"/>
    </reaction>
</comment>
<comment type="subunit">
    <text evidence="1">Homodimer.</text>
</comment>
<comment type="subcellular location">
    <subcellularLocation>
        <location evidence="1">Cytoplasm</location>
    </subcellularLocation>
</comment>
<comment type="similarity">
    <text evidence="1">Belongs to the class-II aminoacyl-tRNA synthetase family. Type 1 subfamily.</text>
</comment>
<feature type="chain" id="PRO_0000110844" description="Aspartate--tRNA ligase">
    <location>
        <begin position="1"/>
        <end position="584"/>
    </location>
</feature>
<feature type="region of interest" description="Aspartate" evidence="1">
    <location>
        <begin position="193"/>
        <end position="196"/>
    </location>
</feature>
<feature type="binding site" evidence="1">
    <location>
        <position position="169"/>
    </location>
    <ligand>
        <name>L-aspartate</name>
        <dbReference type="ChEBI" id="CHEBI:29991"/>
    </ligand>
</feature>
<feature type="binding site" evidence="1">
    <location>
        <begin position="215"/>
        <end position="217"/>
    </location>
    <ligand>
        <name>ATP</name>
        <dbReference type="ChEBI" id="CHEBI:30616"/>
    </ligand>
</feature>
<feature type="binding site" evidence="1">
    <location>
        <position position="215"/>
    </location>
    <ligand>
        <name>L-aspartate</name>
        <dbReference type="ChEBI" id="CHEBI:29991"/>
    </ligand>
</feature>
<feature type="binding site" evidence="1">
    <location>
        <position position="224"/>
    </location>
    <ligand>
        <name>ATP</name>
        <dbReference type="ChEBI" id="CHEBI:30616"/>
    </ligand>
</feature>
<feature type="binding site" evidence="1">
    <location>
        <position position="446"/>
    </location>
    <ligand>
        <name>L-aspartate</name>
        <dbReference type="ChEBI" id="CHEBI:29991"/>
    </ligand>
</feature>
<feature type="binding site" evidence="1">
    <location>
        <position position="480"/>
    </location>
    <ligand>
        <name>ATP</name>
        <dbReference type="ChEBI" id="CHEBI:30616"/>
    </ligand>
</feature>
<feature type="binding site" evidence="1">
    <location>
        <position position="487"/>
    </location>
    <ligand>
        <name>L-aspartate</name>
        <dbReference type="ChEBI" id="CHEBI:29991"/>
    </ligand>
</feature>
<feature type="binding site" evidence="1">
    <location>
        <begin position="532"/>
        <end position="535"/>
    </location>
    <ligand>
        <name>ATP</name>
        <dbReference type="ChEBI" id="CHEBI:30616"/>
    </ligand>
</feature>
<organism>
    <name type="scientific">Buchnera aphidicola subsp. Schizaphis graminum (strain Sg)</name>
    <dbReference type="NCBI Taxonomy" id="198804"/>
    <lineage>
        <taxon>Bacteria</taxon>
        <taxon>Pseudomonadati</taxon>
        <taxon>Pseudomonadota</taxon>
        <taxon>Gammaproteobacteria</taxon>
        <taxon>Enterobacterales</taxon>
        <taxon>Erwiniaceae</taxon>
        <taxon>Buchnera</taxon>
    </lineage>
</organism>
<evidence type="ECO:0000255" key="1">
    <source>
        <dbReference type="HAMAP-Rule" id="MF_00044"/>
    </source>
</evidence>
<name>SYD_BUCAP</name>
<keyword id="KW-0030">Aminoacyl-tRNA synthetase</keyword>
<keyword id="KW-0067">ATP-binding</keyword>
<keyword id="KW-0963">Cytoplasm</keyword>
<keyword id="KW-0436">Ligase</keyword>
<keyword id="KW-0547">Nucleotide-binding</keyword>
<keyword id="KW-0648">Protein biosynthesis</keyword>
<sequence>MRTKYCGNIRIIDLHKSVILCGWVHKIRNFSQFIFIDMRDWTGIVQLVFEKKNNKVFTKAVNLKNESCIQVIGIVKKRNANNNNLDTGEIEILVNKIKVFNISKNLPLDYSNNSNDDIRLKYRYLDLRRSELLENLKIRNKITHLIRIFMENKNFLDIETPFLTKSTPEGARDYLVPSRNYPGNFYALPQSPQLFKQILMISGIDKYYQIVKCFRDEDLRSDRQPEFTQIDIEASFVSSTKIRNLVETLIKKIWLKVINYNLNKFPKISFYDSMKRYGSDKPDLRNPMEIVDISDIVIEEKVASFFQINLKKKNRIALLCFGQGNKISQKKIDEYSNYVKKFGAKKLFYIKINKIENRFQDIQSSIKNILDKNTLENILRKTNAKNGNILFLLADEEKIVNKSLGMLRIKLGNDFIFFKKNTWKPVWIVDFPMFKQNSDGKFSSNHHPFTALKKNNQNKLEKNPNLAISDSYDLVINGYEIGGGSVRIHDAKIQKKVFNIIGIEKQFQREKFGFLIEALKYGPPPHAGIALGLDRIVMLLTNTNNIRDVIAFPKTTSANCLMTDSPSKLKKSILNELGINILKK</sequence>
<reference key="1">
    <citation type="journal article" date="1997" name="Curr. Microbiol.">
        <title>Nucleotide sequence of a DNA fragment from Buchnera aphidicola (Aphid endosymbiont) containing the genes aspS-trxB-serS-serC-aroA-rpsA-himD-tpiA.</title>
        <authorList>
            <person name="Thao M.L."/>
            <person name="Baumann P."/>
        </authorList>
    </citation>
    <scope>NUCLEOTIDE SEQUENCE [GENOMIC DNA]</scope>
</reference>
<reference key="2">
    <citation type="journal article" date="2002" name="Science">
        <title>50 million years of genomic stasis in endosymbiotic bacteria.</title>
        <authorList>
            <person name="Tamas I."/>
            <person name="Klasson L."/>
            <person name="Canbaeck B."/>
            <person name="Naeslund A.K."/>
            <person name="Eriksson A.-S."/>
            <person name="Wernegreen J.J."/>
            <person name="Sandstroem J.P."/>
            <person name="Moran N.A."/>
            <person name="Andersson S.G.E."/>
        </authorList>
    </citation>
    <scope>NUCLEOTIDE SEQUENCE [LARGE SCALE GENOMIC DNA]</scope>
    <source>
        <strain>Sg</strain>
    </source>
</reference>
<dbReference type="EC" id="6.1.1.12" evidence="1"/>
<dbReference type="EMBL" id="L43549">
    <property type="protein sequence ID" value="AAC05432.1"/>
    <property type="molecule type" value="Genomic_DNA"/>
</dbReference>
<dbReference type="EMBL" id="AE013218">
    <property type="protein sequence ID" value="AAM67860.1"/>
    <property type="molecule type" value="Genomic_DNA"/>
</dbReference>
<dbReference type="RefSeq" id="WP_011053827.1">
    <property type="nucleotide sequence ID" value="NC_004061.1"/>
</dbReference>
<dbReference type="SMR" id="P81432"/>
<dbReference type="STRING" id="198804.BUsg_306"/>
<dbReference type="GeneID" id="93003775"/>
<dbReference type="KEGG" id="bas:BUsg_306"/>
<dbReference type="eggNOG" id="COG0173">
    <property type="taxonomic scope" value="Bacteria"/>
</dbReference>
<dbReference type="HOGENOM" id="CLU_014330_3_2_6"/>
<dbReference type="Proteomes" id="UP000000416">
    <property type="component" value="Chromosome"/>
</dbReference>
<dbReference type="GO" id="GO:0005737">
    <property type="term" value="C:cytoplasm"/>
    <property type="evidence" value="ECO:0007669"/>
    <property type="project" value="UniProtKB-SubCell"/>
</dbReference>
<dbReference type="GO" id="GO:0004815">
    <property type="term" value="F:aspartate-tRNA ligase activity"/>
    <property type="evidence" value="ECO:0007669"/>
    <property type="project" value="UniProtKB-UniRule"/>
</dbReference>
<dbReference type="GO" id="GO:0005524">
    <property type="term" value="F:ATP binding"/>
    <property type="evidence" value="ECO:0007669"/>
    <property type="project" value="UniProtKB-UniRule"/>
</dbReference>
<dbReference type="GO" id="GO:0003676">
    <property type="term" value="F:nucleic acid binding"/>
    <property type="evidence" value="ECO:0007669"/>
    <property type="project" value="InterPro"/>
</dbReference>
<dbReference type="GO" id="GO:0006422">
    <property type="term" value="P:aspartyl-tRNA aminoacylation"/>
    <property type="evidence" value="ECO:0007669"/>
    <property type="project" value="UniProtKB-UniRule"/>
</dbReference>
<dbReference type="CDD" id="cd00777">
    <property type="entry name" value="AspRS_core"/>
    <property type="match status" value="1"/>
</dbReference>
<dbReference type="CDD" id="cd04317">
    <property type="entry name" value="EcAspRS_like_N"/>
    <property type="match status" value="1"/>
</dbReference>
<dbReference type="Gene3D" id="3.30.930.10">
    <property type="entry name" value="Bira Bifunctional Protein, Domain 2"/>
    <property type="match status" value="1"/>
</dbReference>
<dbReference type="Gene3D" id="3.30.1360.30">
    <property type="entry name" value="GAD-like domain"/>
    <property type="match status" value="1"/>
</dbReference>
<dbReference type="Gene3D" id="2.40.50.140">
    <property type="entry name" value="Nucleic acid-binding proteins"/>
    <property type="match status" value="1"/>
</dbReference>
<dbReference type="HAMAP" id="MF_00044">
    <property type="entry name" value="Asp_tRNA_synth_type1"/>
    <property type="match status" value="1"/>
</dbReference>
<dbReference type="InterPro" id="IPR004364">
    <property type="entry name" value="Aa-tRNA-synt_II"/>
</dbReference>
<dbReference type="InterPro" id="IPR006195">
    <property type="entry name" value="aa-tRNA-synth_II"/>
</dbReference>
<dbReference type="InterPro" id="IPR045864">
    <property type="entry name" value="aa-tRNA-synth_II/BPL/LPL"/>
</dbReference>
<dbReference type="InterPro" id="IPR004524">
    <property type="entry name" value="Asp-tRNA-ligase_1"/>
</dbReference>
<dbReference type="InterPro" id="IPR047089">
    <property type="entry name" value="Asp-tRNA-ligase_1_N"/>
</dbReference>
<dbReference type="InterPro" id="IPR002312">
    <property type="entry name" value="Asp/Asn-tRNA-synth_IIb"/>
</dbReference>
<dbReference type="InterPro" id="IPR047090">
    <property type="entry name" value="AspRS_core"/>
</dbReference>
<dbReference type="InterPro" id="IPR004115">
    <property type="entry name" value="GAD-like_sf"/>
</dbReference>
<dbReference type="InterPro" id="IPR029351">
    <property type="entry name" value="GAD_dom"/>
</dbReference>
<dbReference type="InterPro" id="IPR012340">
    <property type="entry name" value="NA-bd_OB-fold"/>
</dbReference>
<dbReference type="InterPro" id="IPR004365">
    <property type="entry name" value="NA-bd_OB_tRNA"/>
</dbReference>
<dbReference type="NCBIfam" id="TIGR00459">
    <property type="entry name" value="aspS_bact"/>
    <property type="match status" value="1"/>
</dbReference>
<dbReference type="NCBIfam" id="NF001750">
    <property type="entry name" value="PRK00476.1"/>
    <property type="match status" value="1"/>
</dbReference>
<dbReference type="PANTHER" id="PTHR22594:SF5">
    <property type="entry name" value="ASPARTATE--TRNA LIGASE, MITOCHONDRIAL"/>
    <property type="match status" value="1"/>
</dbReference>
<dbReference type="PANTHER" id="PTHR22594">
    <property type="entry name" value="ASPARTYL/LYSYL-TRNA SYNTHETASE"/>
    <property type="match status" value="1"/>
</dbReference>
<dbReference type="Pfam" id="PF02938">
    <property type="entry name" value="GAD"/>
    <property type="match status" value="1"/>
</dbReference>
<dbReference type="Pfam" id="PF00152">
    <property type="entry name" value="tRNA-synt_2"/>
    <property type="match status" value="1"/>
</dbReference>
<dbReference type="Pfam" id="PF01336">
    <property type="entry name" value="tRNA_anti-codon"/>
    <property type="match status" value="1"/>
</dbReference>
<dbReference type="PRINTS" id="PR01042">
    <property type="entry name" value="TRNASYNTHASP"/>
</dbReference>
<dbReference type="SUPFAM" id="SSF55681">
    <property type="entry name" value="Class II aaRS and biotin synthetases"/>
    <property type="match status" value="1"/>
</dbReference>
<dbReference type="SUPFAM" id="SSF55261">
    <property type="entry name" value="GAD domain-like"/>
    <property type="match status" value="1"/>
</dbReference>
<dbReference type="SUPFAM" id="SSF50249">
    <property type="entry name" value="Nucleic acid-binding proteins"/>
    <property type="match status" value="1"/>
</dbReference>
<dbReference type="PROSITE" id="PS50862">
    <property type="entry name" value="AA_TRNA_LIGASE_II"/>
    <property type="match status" value="1"/>
</dbReference>
<accession>P81432</accession>
<proteinExistence type="inferred from homology"/>
<gene>
    <name evidence="1" type="primary">aspS</name>
    <name type="ordered locus">BUsg_306</name>
</gene>
<protein>
    <recommendedName>
        <fullName evidence="1">Aspartate--tRNA ligase</fullName>
        <ecNumber evidence="1">6.1.1.12</ecNumber>
    </recommendedName>
    <alternativeName>
        <fullName evidence="1">Aspartyl-tRNA synthetase</fullName>
        <shortName evidence="1">AspRS</shortName>
    </alternativeName>
</protein>